<sequence>MSRFDTLFANLKAKNEGAFVPFVTLCDPDFDRSFEIIETLIANGADALELGFPFSDPLLDGSVIQAANKRALDGGYSTDACFEMIAKIRSKYPEIPIGLLLCANLVFVPTQCVFFNRCAESGVDAVLIADVPVLASEEFTQAAKKHGIQSVFICPPNADQVTIERIANLTEGYTYLVSRSGVTSAENQAHAKNLDNLIESLKRSNSAPILQGFGIAKPAQVKEALALGCDGAISGSAIVKIIERNLDSQTQLLSELAKFVSVMKAATKS</sequence>
<reference key="1">
    <citation type="submission" date="2008-06" db="EMBL/GenBank/DDBJ databases">
        <title>Genome and proteome analysis of A. pleuropneumoniae serotype 7.</title>
        <authorList>
            <person name="Linke B."/>
            <person name="Buettner F."/>
            <person name="Martinez-Arias R."/>
            <person name="Goesmann A."/>
            <person name="Baltes N."/>
            <person name="Tegetmeyer H."/>
            <person name="Singh M."/>
            <person name="Gerlach G.F."/>
        </authorList>
    </citation>
    <scope>NUCLEOTIDE SEQUENCE [LARGE SCALE GENOMIC DNA]</scope>
    <source>
        <strain>AP76</strain>
    </source>
</reference>
<comment type="function">
    <text evidence="1">The alpha subunit is responsible for the aldol cleavage of indoleglycerol phosphate to indole and glyceraldehyde 3-phosphate.</text>
</comment>
<comment type="catalytic activity">
    <reaction evidence="1">
        <text>(1S,2R)-1-C-(indol-3-yl)glycerol 3-phosphate + L-serine = D-glyceraldehyde 3-phosphate + L-tryptophan + H2O</text>
        <dbReference type="Rhea" id="RHEA:10532"/>
        <dbReference type="ChEBI" id="CHEBI:15377"/>
        <dbReference type="ChEBI" id="CHEBI:33384"/>
        <dbReference type="ChEBI" id="CHEBI:57912"/>
        <dbReference type="ChEBI" id="CHEBI:58866"/>
        <dbReference type="ChEBI" id="CHEBI:59776"/>
        <dbReference type="EC" id="4.2.1.20"/>
    </reaction>
</comment>
<comment type="pathway">
    <text evidence="1">Amino-acid biosynthesis; L-tryptophan biosynthesis; L-tryptophan from chorismate: step 5/5.</text>
</comment>
<comment type="subunit">
    <text evidence="1">Tetramer of two alpha and two beta chains.</text>
</comment>
<comment type="similarity">
    <text evidence="1">Belongs to the TrpA family.</text>
</comment>
<proteinExistence type="inferred from homology"/>
<keyword id="KW-0028">Amino-acid biosynthesis</keyword>
<keyword id="KW-0057">Aromatic amino acid biosynthesis</keyword>
<keyword id="KW-0456">Lyase</keyword>
<keyword id="KW-0822">Tryptophan biosynthesis</keyword>
<organism>
    <name type="scientific">Actinobacillus pleuropneumoniae serotype 7 (strain AP76)</name>
    <dbReference type="NCBI Taxonomy" id="537457"/>
    <lineage>
        <taxon>Bacteria</taxon>
        <taxon>Pseudomonadati</taxon>
        <taxon>Pseudomonadota</taxon>
        <taxon>Gammaproteobacteria</taxon>
        <taxon>Pasteurellales</taxon>
        <taxon>Pasteurellaceae</taxon>
        <taxon>Actinobacillus</taxon>
    </lineage>
</organism>
<protein>
    <recommendedName>
        <fullName evidence="1">Tryptophan synthase alpha chain</fullName>
        <ecNumber evidence="1">4.2.1.20</ecNumber>
    </recommendedName>
</protein>
<evidence type="ECO:0000255" key="1">
    <source>
        <dbReference type="HAMAP-Rule" id="MF_00131"/>
    </source>
</evidence>
<name>TRPA_ACTP7</name>
<gene>
    <name evidence="1" type="primary">trpA</name>
    <name type="ordered locus">APP7_0547</name>
</gene>
<accession>B3GX47</accession>
<dbReference type="EC" id="4.2.1.20" evidence="1"/>
<dbReference type="EMBL" id="CP001091">
    <property type="protein sequence ID" value="ACE61199.1"/>
    <property type="molecule type" value="Genomic_DNA"/>
</dbReference>
<dbReference type="RefSeq" id="WP_005600565.1">
    <property type="nucleotide sequence ID" value="NC_010939.1"/>
</dbReference>
<dbReference type="SMR" id="B3GX47"/>
<dbReference type="KEGG" id="apa:APP7_0547"/>
<dbReference type="HOGENOM" id="CLU_016734_0_4_6"/>
<dbReference type="UniPathway" id="UPA00035">
    <property type="reaction ID" value="UER00044"/>
</dbReference>
<dbReference type="Proteomes" id="UP000001226">
    <property type="component" value="Chromosome"/>
</dbReference>
<dbReference type="GO" id="GO:0005829">
    <property type="term" value="C:cytosol"/>
    <property type="evidence" value="ECO:0007669"/>
    <property type="project" value="TreeGrafter"/>
</dbReference>
<dbReference type="GO" id="GO:0004834">
    <property type="term" value="F:tryptophan synthase activity"/>
    <property type="evidence" value="ECO:0007669"/>
    <property type="project" value="UniProtKB-UniRule"/>
</dbReference>
<dbReference type="CDD" id="cd04724">
    <property type="entry name" value="Tryptophan_synthase_alpha"/>
    <property type="match status" value="1"/>
</dbReference>
<dbReference type="FunFam" id="3.20.20.70:FF:000037">
    <property type="entry name" value="Tryptophan synthase alpha chain"/>
    <property type="match status" value="1"/>
</dbReference>
<dbReference type="Gene3D" id="3.20.20.70">
    <property type="entry name" value="Aldolase class I"/>
    <property type="match status" value="1"/>
</dbReference>
<dbReference type="HAMAP" id="MF_00131">
    <property type="entry name" value="Trp_synth_alpha"/>
    <property type="match status" value="1"/>
</dbReference>
<dbReference type="InterPro" id="IPR013785">
    <property type="entry name" value="Aldolase_TIM"/>
</dbReference>
<dbReference type="InterPro" id="IPR011060">
    <property type="entry name" value="RibuloseP-bd_barrel"/>
</dbReference>
<dbReference type="InterPro" id="IPR018204">
    <property type="entry name" value="Trp_synthase_alpha_AS"/>
</dbReference>
<dbReference type="InterPro" id="IPR002028">
    <property type="entry name" value="Trp_synthase_suA"/>
</dbReference>
<dbReference type="NCBIfam" id="TIGR00262">
    <property type="entry name" value="trpA"/>
    <property type="match status" value="1"/>
</dbReference>
<dbReference type="PANTHER" id="PTHR43406:SF1">
    <property type="entry name" value="TRYPTOPHAN SYNTHASE ALPHA CHAIN, CHLOROPLASTIC"/>
    <property type="match status" value="1"/>
</dbReference>
<dbReference type="PANTHER" id="PTHR43406">
    <property type="entry name" value="TRYPTOPHAN SYNTHASE, ALPHA CHAIN"/>
    <property type="match status" value="1"/>
</dbReference>
<dbReference type="Pfam" id="PF00290">
    <property type="entry name" value="Trp_syntA"/>
    <property type="match status" value="1"/>
</dbReference>
<dbReference type="SUPFAM" id="SSF51366">
    <property type="entry name" value="Ribulose-phoshate binding barrel"/>
    <property type="match status" value="1"/>
</dbReference>
<dbReference type="PROSITE" id="PS00167">
    <property type="entry name" value="TRP_SYNTHASE_ALPHA"/>
    <property type="match status" value="1"/>
</dbReference>
<feature type="chain" id="PRO_1000095689" description="Tryptophan synthase alpha chain">
    <location>
        <begin position="1"/>
        <end position="269"/>
    </location>
</feature>
<feature type="active site" description="Proton acceptor" evidence="1">
    <location>
        <position position="49"/>
    </location>
</feature>
<feature type="active site" description="Proton acceptor" evidence="1">
    <location>
        <position position="60"/>
    </location>
</feature>